<sequence>MRHDHIISAKQLSRGDIETVLDHAADIAADPGAFADRHSDTLLGLLFFEPSTRTKMSFTTAMKRLGGDIVDMGSVESSSVKKGESLADTVRVVEGYTDALVLRHPMEGSAKMASEFVDVPLVNAGDGAGQHPTQTLLDLYTIRENAGFDDLTIGIMGDLKYGRTVHSLAHALTTVDASQHFISPESLQLPRSVRYDLHEAGAGIREHTELDDILPELDVLYVTRIQAERFPDESEYREVAGQYQIDGDTLAAAKDDLTVMHPLPRVDEIAHDVDETTHAQYFQQAHNGVPVRMALLDLMLGGDQ</sequence>
<name>PYRB_HALMA</name>
<comment type="function">
    <text evidence="1">Catalyzes the condensation of carbamoyl phosphate and aspartate to form carbamoyl aspartate and inorganic phosphate, the committed step in the de novo pyrimidine nucleotide biosynthesis pathway.</text>
</comment>
<comment type="catalytic activity">
    <reaction evidence="1">
        <text>carbamoyl phosphate + L-aspartate = N-carbamoyl-L-aspartate + phosphate + H(+)</text>
        <dbReference type="Rhea" id="RHEA:20013"/>
        <dbReference type="ChEBI" id="CHEBI:15378"/>
        <dbReference type="ChEBI" id="CHEBI:29991"/>
        <dbReference type="ChEBI" id="CHEBI:32814"/>
        <dbReference type="ChEBI" id="CHEBI:43474"/>
        <dbReference type="ChEBI" id="CHEBI:58228"/>
        <dbReference type="EC" id="2.1.3.2"/>
    </reaction>
</comment>
<comment type="pathway">
    <text evidence="1">Pyrimidine metabolism; UMP biosynthesis via de novo pathway; (S)-dihydroorotate from bicarbonate: step 2/3.</text>
</comment>
<comment type="subunit">
    <text evidence="1">Heterooligomer of catalytic and regulatory chains.</text>
</comment>
<comment type="similarity">
    <text evidence="1">Belongs to the aspartate/ornithine carbamoyltransferase superfamily. ATCase family.</text>
</comment>
<gene>
    <name evidence="1" type="primary">pyrB</name>
    <name type="ordered locus">rrnAC1225</name>
</gene>
<evidence type="ECO:0000255" key="1">
    <source>
        <dbReference type="HAMAP-Rule" id="MF_00001"/>
    </source>
</evidence>
<proteinExistence type="inferred from homology"/>
<dbReference type="EC" id="2.1.3.2" evidence="1"/>
<dbReference type="EMBL" id="AY596297">
    <property type="protein sequence ID" value="AAV46169.1"/>
    <property type="molecule type" value="Genomic_DNA"/>
</dbReference>
<dbReference type="RefSeq" id="WP_004960692.1">
    <property type="nucleotide sequence ID" value="NZ_CP039138.1"/>
</dbReference>
<dbReference type="SMR" id="Q5V2T3"/>
<dbReference type="STRING" id="272569.rrnAC1225"/>
<dbReference type="PaxDb" id="272569-rrnAC1225"/>
<dbReference type="EnsemblBacteria" id="AAV46169">
    <property type="protein sequence ID" value="AAV46169"/>
    <property type="gene ID" value="rrnAC1225"/>
</dbReference>
<dbReference type="GeneID" id="64822160"/>
<dbReference type="KEGG" id="hma:rrnAC1225"/>
<dbReference type="PATRIC" id="fig|272569.17.peg.1936"/>
<dbReference type="eggNOG" id="arCOG00911">
    <property type="taxonomic scope" value="Archaea"/>
</dbReference>
<dbReference type="HOGENOM" id="CLU_043846_1_2_2"/>
<dbReference type="UniPathway" id="UPA00070">
    <property type="reaction ID" value="UER00116"/>
</dbReference>
<dbReference type="Proteomes" id="UP000001169">
    <property type="component" value="Chromosome I"/>
</dbReference>
<dbReference type="GO" id="GO:0016597">
    <property type="term" value="F:amino acid binding"/>
    <property type="evidence" value="ECO:0007669"/>
    <property type="project" value="InterPro"/>
</dbReference>
<dbReference type="GO" id="GO:0004070">
    <property type="term" value="F:aspartate carbamoyltransferase activity"/>
    <property type="evidence" value="ECO:0007669"/>
    <property type="project" value="UniProtKB-UniRule"/>
</dbReference>
<dbReference type="GO" id="GO:0006207">
    <property type="term" value="P:'de novo' pyrimidine nucleobase biosynthetic process"/>
    <property type="evidence" value="ECO:0007669"/>
    <property type="project" value="InterPro"/>
</dbReference>
<dbReference type="GO" id="GO:0044205">
    <property type="term" value="P:'de novo' UMP biosynthetic process"/>
    <property type="evidence" value="ECO:0007669"/>
    <property type="project" value="UniProtKB-UniRule"/>
</dbReference>
<dbReference type="GO" id="GO:0006520">
    <property type="term" value="P:amino acid metabolic process"/>
    <property type="evidence" value="ECO:0007669"/>
    <property type="project" value="InterPro"/>
</dbReference>
<dbReference type="FunFam" id="3.40.50.1370:FF:000002">
    <property type="entry name" value="Aspartate carbamoyltransferase 2"/>
    <property type="match status" value="1"/>
</dbReference>
<dbReference type="Gene3D" id="3.40.50.1370">
    <property type="entry name" value="Aspartate/ornithine carbamoyltransferase"/>
    <property type="match status" value="2"/>
</dbReference>
<dbReference type="HAMAP" id="MF_00001">
    <property type="entry name" value="Asp_carb_tr"/>
    <property type="match status" value="1"/>
</dbReference>
<dbReference type="InterPro" id="IPR006132">
    <property type="entry name" value="Asp/Orn_carbamoyltranf_P-bd"/>
</dbReference>
<dbReference type="InterPro" id="IPR006130">
    <property type="entry name" value="Asp/Orn_carbamoylTrfase"/>
</dbReference>
<dbReference type="InterPro" id="IPR036901">
    <property type="entry name" value="Asp/Orn_carbamoylTrfase_sf"/>
</dbReference>
<dbReference type="InterPro" id="IPR002082">
    <property type="entry name" value="Asp_carbamoyltransf"/>
</dbReference>
<dbReference type="InterPro" id="IPR006131">
    <property type="entry name" value="Asp_carbamoyltransf_Asp/Orn-bd"/>
</dbReference>
<dbReference type="NCBIfam" id="TIGR00670">
    <property type="entry name" value="asp_carb_tr"/>
    <property type="match status" value="1"/>
</dbReference>
<dbReference type="NCBIfam" id="NF002032">
    <property type="entry name" value="PRK00856.1"/>
    <property type="match status" value="1"/>
</dbReference>
<dbReference type="PANTHER" id="PTHR45753:SF6">
    <property type="entry name" value="ASPARTATE CARBAMOYLTRANSFERASE"/>
    <property type="match status" value="1"/>
</dbReference>
<dbReference type="PANTHER" id="PTHR45753">
    <property type="entry name" value="ORNITHINE CARBAMOYLTRANSFERASE, MITOCHONDRIAL"/>
    <property type="match status" value="1"/>
</dbReference>
<dbReference type="Pfam" id="PF00185">
    <property type="entry name" value="OTCace"/>
    <property type="match status" value="1"/>
</dbReference>
<dbReference type="Pfam" id="PF02729">
    <property type="entry name" value="OTCace_N"/>
    <property type="match status" value="1"/>
</dbReference>
<dbReference type="PRINTS" id="PR00100">
    <property type="entry name" value="AOTCASE"/>
</dbReference>
<dbReference type="PRINTS" id="PR00101">
    <property type="entry name" value="ATCASE"/>
</dbReference>
<dbReference type="SUPFAM" id="SSF53671">
    <property type="entry name" value="Aspartate/ornithine carbamoyltransferase"/>
    <property type="match status" value="1"/>
</dbReference>
<dbReference type="PROSITE" id="PS00097">
    <property type="entry name" value="CARBAMOYLTRANSFERASE"/>
    <property type="match status" value="1"/>
</dbReference>
<feature type="chain" id="PRO_0000113244" description="Aspartate carbamoyltransferase catalytic subunit">
    <location>
        <begin position="1"/>
        <end position="304"/>
    </location>
</feature>
<feature type="binding site" evidence="1">
    <location>
        <position position="53"/>
    </location>
    <ligand>
        <name>carbamoyl phosphate</name>
        <dbReference type="ChEBI" id="CHEBI:58228"/>
    </ligand>
</feature>
<feature type="binding site" evidence="1">
    <location>
        <position position="54"/>
    </location>
    <ligand>
        <name>carbamoyl phosphate</name>
        <dbReference type="ChEBI" id="CHEBI:58228"/>
    </ligand>
</feature>
<feature type="binding site" evidence="1">
    <location>
        <position position="82"/>
    </location>
    <ligand>
        <name>L-aspartate</name>
        <dbReference type="ChEBI" id="CHEBI:29991"/>
    </ligand>
</feature>
<feature type="binding site" evidence="1">
    <location>
        <position position="103"/>
    </location>
    <ligand>
        <name>carbamoyl phosphate</name>
        <dbReference type="ChEBI" id="CHEBI:58228"/>
    </ligand>
</feature>
<feature type="binding site" evidence="1">
    <location>
        <position position="131"/>
    </location>
    <ligand>
        <name>carbamoyl phosphate</name>
        <dbReference type="ChEBI" id="CHEBI:58228"/>
    </ligand>
</feature>
<feature type="binding site" evidence="1">
    <location>
        <position position="134"/>
    </location>
    <ligand>
        <name>carbamoyl phosphate</name>
        <dbReference type="ChEBI" id="CHEBI:58228"/>
    </ligand>
</feature>
<feature type="binding site" evidence="1">
    <location>
        <position position="163"/>
    </location>
    <ligand>
        <name>L-aspartate</name>
        <dbReference type="ChEBI" id="CHEBI:29991"/>
    </ligand>
</feature>
<feature type="binding site" evidence="1">
    <location>
        <position position="224"/>
    </location>
    <ligand>
        <name>L-aspartate</name>
        <dbReference type="ChEBI" id="CHEBI:29991"/>
    </ligand>
</feature>
<feature type="binding site" evidence="1">
    <location>
        <position position="263"/>
    </location>
    <ligand>
        <name>carbamoyl phosphate</name>
        <dbReference type="ChEBI" id="CHEBI:58228"/>
    </ligand>
</feature>
<feature type="binding site" evidence="1">
    <location>
        <position position="264"/>
    </location>
    <ligand>
        <name>carbamoyl phosphate</name>
        <dbReference type="ChEBI" id="CHEBI:58228"/>
    </ligand>
</feature>
<protein>
    <recommendedName>
        <fullName evidence="1">Aspartate carbamoyltransferase catalytic subunit</fullName>
        <ecNumber evidence="1">2.1.3.2</ecNumber>
    </recommendedName>
    <alternativeName>
        <fullName evidence="1">Aspartate transcarbamylase</fullName>
        <shortName evidence="1">ATCase</shortName>
    </alternativeName>
</protein>
<reference key="1">
    <citation type="journal article" date="2004" name="Genome Res.">
        <title>Genome sequence of Haloarcula marismortui: a halophilic archaeon from the Dead Sea.</title>
        <authorList>
            <person name="Baliga N.S."/>
            <person name="Bonneau R."/>
            <person name="Facciotti M.T."/>
            <person name="Pan M."/>
            <person name="Glusman G."/>
            <person name="Deutsch E.W."/>
            <person name="Shannon P."/>
            <person name="Chiu Y."/>
            <person name="Weng R.S."/>
            <person name="Gan R.R."/>
            <person name="Hung P."/>
            <person name="Date S.V."/>
            <person name="Marcotte E."/>
            <person name="Hood L."/>
            <person name="Ng W.V."/>
        </authorList>
    </citation>
    <scope>NUCLEOTIDE SEQUENCE [LARGE SCALE GENOMIC DNA]</scope>
    <source>
        <strain>ATCC 43049 / DSM 3752 / JCM 8966 / VKM B-1809</strain>
    </source>
</reference>
<keyword id="KW-0665">Pyrimidine biosynthesis</keyword>
<keyword id="KW-1185">Reference proteome</keyword>
<keyword id="KW-0808">Transferase</keyword>
<organism>
    <name type="scientific">Haloarcula marismortui (strain ATCC 43049 / DSM 3752 / JCM 8966 / VKM B-1809)</name>
    <name type="common">Halobacterium marismortui</name>
    <dbReference type="NCBI Taxonomy" id="272569"/>
    <lineage>
        <taxon>Archaea</taxon>
        <taxon>Methanobacteriati</taxon>
        <taxon>Methanobacteriota</taxon>
        <taxon>Stenosarchaea group</taxon>
        <taxon>Halobacteria</taxon>
        <taxon>Halobacteriales</taxon>
        <taxon>Haloarculaceae</taxon>
        <taxon>Haloarcula</taxon>
    </lineage>
</organism>
<accession>Q5V2T3</accession>